<feature type="chain" id="PRO_0000399319" description="Adenylosuccinate synthetase">
    <location>
        <begin position="1"/>
        <end position="424"/>
    </location>
</feature>
<feature type="active site" description="Proton acceptor" evidence="2">
    <location>
        <position position="13"/>
    </location>
</feature>
<feature type="active site" description="Proton donor" evidence="2">
    <location>
        <position position="41"/>
    </location>
</feature>
<feature type="binding site" evidence="2">
    <location>
        <begin position="12"/>
        <end position="18"/>
    </location>
    <ligand>
        <name>GTP</name>
        <dbReference type="ChEBI" id="CHEBI:37565"/>
    </ligand>
</feature>
<feature type="binding site" description="in other chain" evidence="2">
    <location>
        <begin position="13"/>
        <end position="16"/>
    </location>
    <ligand>
        <name>IMP</name>
        <dbReference type="ChEBI" id="CHEBI:58053"/>
        <note>ligand shared between dimeric partners</note>
    </ligand>
</feature>
<feature type="binding site" evidence="2">
    <location>
        <position position="13"/>
    </location>
    <ligand>
        <name>Mg(2+)</name>
        <dbReference type="ChEBI" id="CHEBI:18420"/>
    </ligand>
</feature>
<feature type="binding site" description="in other chain" evidence="2">
    <location>
        <begin position="38"/>
        <end position="41"/>
    </location>
    <ligand>
        <name>IMP</name>
        <dbReference type="ChEBI" id="CHEBI:58053"/>
        <note>ligand shared between dimeric partners</note>
    </ligand>
</feature>
<feature type="binding site" evidence="2">
    <location>
        <begin position="40"/>
        <end position="42"/>
    </location>
    <ligand>
        <name>GTP</name>
        <dbReference type="ChEBI" id="CHEBI:37565"/>
    </ligand>
</feature>
<feature type="binding site" evidence="2">
    <location>
        <position position="40"/>
    </location>
    <ligand>
        <name>Mg(2+)</name>
        <dbReference type="ChEBI" id="CHEBI:18420"/>
    </ligand>
</feature>
<feature type="binding site" description="in other chain" evidence="2">
    <location>
        <position position="130"/>
    </location>
    <ligand>
        <name>IMP</name>
        <dbReference type="ChEBI" id="CHEBI:58053"/>
        <note>ligand shared between dimeric partners</note>
    </ligand>
</feature>
<feature type="binding site" evidence="2">
    <location>
        <position position="144"/>
    </location>
    <ligand>
        <name>IMP</name>
        <dbReference type="ChEBI" id="CHEBI:58053"/>
        <note>ligand shared between dimeric partners</note>
    </ligand>
</feature>
<feature type="binding site" description="in other chain" evidence="2">
    <location>
        <position position="220"/>
    </location>
    <ligand>
        <name>IMP</name>
        <dbReference type="ChEBI" id="CHEBI:58053"/>
        <note>ligand shared between dimeric partners</note>
    </ligand>
</feature>
<feature type="binding site" description="in other chain" evidence="2">
    <location>
        <position position="235"/>
    </location>
    <ligand>
        <name>IMP</name>
        <dbReference type="ChEBI" id="CHEBI:58053"/>
        <note>ligand shared between dimeric partners</note>
    </ligand>
</feature>
<feature type="binding site" evidence="2">
    <location>
        <begin position="295"/>
        <end position="301"/>
    </location>
    <ligand>
        <name>substrate</name>
    </ligand>
</feature>
<feature type="binding site" description="in other chain" evidence="2">
    <location>
        <position position="299"/>
    </location>
    <ligand>
        <name>IMP</name>
        <dbReference type="ChEBI" id="CHEBI:58053"/>
        <note>ligand shared between dimeric partners</note>
    </ligand>
</feature>
<feature type="binding site" evidence="2">
    <location>
        <position position="301"/>
    </location>
    <ligand>
        <name>GTP</name>
        <dbReference type="ChEBI" id="CHEBI:37565"/>
    </ligand>
</feature>
<feature type="binding site" evidence="2">
    <location>
        <begin position="327"/>
        <end position="329"/>
    </location>
    <ligand>
        <name>GTP</name>
        <dbReference type="ChEBI" id="CHEBI:37565"/>
    </ligand>
</feature>
<feature type="binding site" evidence="2">
    <location>
        <begin position="412"/>
        <end position="414"/>
    </location>
    <ligand>
        <name>GTP</name>
        <dbReference type="ChEBI" id="CHEBI:37565"/>
    </ligand>
</feature>
<organism>
    <name type="scientific">Aspergillus clavatus (strain ATCC 1007 / CBS 513.65 / DSM 816 / NCTC 3887 / NRRL 1 / QM 1276 / 107)</name>
    <dbReference type="NCBI Taxonomy" id="344612"/>
    <lineage>
        <taxon>Eukaryota</taxon>
        <taxon>Fungi</taxon>
        <taxon>Dikarya</taxon>
        <taxon>Ascomycota</taxon>
        <taxon>Pezizomycotina</taxon>
        <taxon>Eurotiomycetes</taxon>
        <taxon>Eurotiomycetidae</taxon>
        <taxon>Eurotiales</taxon>
        <taxon>Aspergillaceae</taxon>
        <taxon>Aspergillus</taxon>
        <taxon>Aspergillus subgen. Fumigati</taxon>
    </lineage>
</organism>
<accession>A1CNR3</accession>
<keyword id="KW-0963">Cytoplasm</keyword>
<keyword id="KW-0342">GTP-binding</keyword>
<keyword id="KW-0436">Ligase</keyword>
<keyword id="KW-0460">Magnesium</keyword>
<keyword id="KW-0479">Metal-binding</keyword>
<keyword id="KW-0547">Nucleotide-binding</keyword>
<keyword id="KW-0658">Purine biosynthesis</keyword>
<keyword id="KW-1185">Reference proteome</keyword>
<dbReference type="EC" id="6.3.4.4" evidence="2"/>
<dbReference type="EMBL" id="DS027059">
    <property type="protein sequence ID" value="EAW07284.1"/>
    <property type="molecule type" value="Genomic_DNA"/>
</dbReference>
<dbReference type="RefSeq" id="XP_001268710.1">
    <property type="nucleotide sequence ID" value="XM_001268709.1"/>
</dbReference>
<dbReference type="SMR" id="A1CNR3"/>
<dbReference type="STRING" id="344612.A1CNR3"/>
<dbReference type="EnsemblFungi" id="EAW07284">
    <property type="protein sequence ID" value="EAW07284"/>
    <property type="gene ID" value="ACLA_019890"/>
</dbReference>
<dbReference type="GeneID" id="4701996"/>
<dbReference type="KEGG" id="act:ACLA_019890"/>
<dbReference type="VEuPathDB" id="FungiDB:ACLA_019890"/>
<dbReference type="eggNOG" id="KOG1355">
    <property type="taxonomic scope" value="Eukaryota"/>
</dbReference>
<dbReference type="HOGENOM" id="CLU_029848_3_2_1"/>
<dbReference type="OMA" id="FHHAKPI"/>
<dbReference type="OrthoDB" id="10265645at2759"/>
<dbReference type="UniPathway" id="UPA00075">
    <property type="reaction ID" value="UER00335"/>
</dbReference>
<dbReference type="Proteomes" id="UP000006701">
    <property type="component" value="Unassembled WGS sequence"/>
</dbReference>
<dbReference type="GO" id="GO:0005737">
    <property type="term" value="C:cytoplasm"/>
    <property type="evidence" value="ECO:0007669"/>
    <property type="project" value="UniProtKB-SubCell"/>
</dbReference>
<dbReference type="GO" id="GO:0004019">
    <property type="term" value="F:adenylosuccinate synthase activity"/>
    <property type="evidence" value="ECO:0007669"/>
    <property type="project" value="UniProtKB-UniRule"/>
</dbReference>
<dbReference type="GO" id="GO:0016208">
    <property type="term" value="F:AMP binding"/>
    <property type="evidence" value="ECO:0007669"/>
    <property type="project" value="EnsemblFungi"/>
</dbReference>
<dbReference type="GO" id="GO:0019002">
    <property type="term" value="F:GMP binding"/>
    <property type="evidence" value="ECO:0007669"/>
    <property type="project" value="EnsemblFungi"/>
</dbReference>
<dbReference type="GO" id="GO:0005525">
    <property type="term" value="F:GTP binding"/>
    <property type="evidence" value="ECO:0007669"/>
    <property type="project" value="UniProtKB-UniRule"/>
</dbReference>
<dbReference type="GO" id="GO:0000287">
    <property type="term" value="F:magnesium ion binding"/>
    <property type="evidence" value="ECO:0007669"/>
    <property type="project" value="UniProtKB-UniRule"/>
</dbReference>
<dbReference type="GO" id="GO:0044208">
    <property type="term" value="P:'de novo' AMP biosynthetic process"/>
    <property type="evidence" value="ECO:0007669"/>
    <property type="project" value="UniProtKB-UniRule"/>
</dbReference>
<dbReference type="GO" id="GO:0071276">
    <property type="term" value="P:cellular response to cadmium ion"/>
    <property type="evidence" value="ECO:0007669"/>
    <property type="project" value="EnsemblFungi"/>
</dbReference>
<dbReference type="GO" id="GO:0046040">
    <property type="term" value="P:IMP metabolic process"/>
    <property type="evidence" value="ECO:0007669"/>
    <property type="project" value="TreeGrafter"/>
</dbReference>
<dbReference type="CDD" id="cd03108">
    <property type="entry name" value="AdSS"/>
    <property type="match status" value="1"/>
</dbReference>
<dbReference type="FunFam" id="1.10.300.10:FF:000001">
    <property type="entry name" value="Adenylosuccinate synthetase"/>
    <property type="match status" value="1"/>
</dbReference>
<dbReference type="FunFam" id="3.90.170.10:FF:000001">
    <property type="entry name" value="Adenylosuccinate synthetase"/>
    <property type="match status" value="1"/>
</dbReference>
<dbReference type="Gene3D" id="3.40.440.10">
    <property type="entry name" value="Adenylosuccinate Synthetase, subunit A, domain 1"/>
    <property type="match status" value="1"/>
</dbReference>
<dbReference type="Gene3D" id="1.10.300.10">
    <property type="entry name" value="Adenylosuccinate Synthetase, subunit A, domain 2"/>
    <property type="match status" value="1"/>
</dbReference>
<dbReference type="Gene3D" id="3.90.170.10">
    <property type="entry name" value="Adenylosuccinate Synthetase, subunit A, domain 3"/>
    <property type="match status" value="1"/>
</dbReference>
<dbReference type="HAMAP" id="MF_00011">
    <property type="entry name" value="Adenylosucc_synth"/>
    <property type="match status" value="1"/>
</dbReference>
<dbReference type="InterPro" id="IPR018220">
    <property type="entry name" value="Adenylosuccin_syn_GTP-bd"/>
</dbReference>
<dbReference type="InterPro" id="IPR033128">
    <property type="entry name" value="Adenylosuccin_syn_Lys_AS"/>
</dbReference>
<dbReference type="InterPro" id="IPR042109">
    <property type="entry name" value="Adenylosuccinate_synth_dom1"/>
</dbReference>
<dbReference type="InterPro" id="IPR042110">
    <property type="entry name" value="Adenylosuccinate_synth_dom2"/>
</dbReference>
<dbReference type="InterPro" id="IPR042111">
    <property type="entry name" value="Adenylosuccinate_synth_dom3"/>
</dbReference>
<dbReference type="InterPro" id="IPR001114">
    <property type="entry name" value="Adenylosuccinate_synthetase"/>
</dbReference>
<dbReference type="InterPro" id="IPR027417">
    <property type="entry name" value="P-loop_NTPase"/>
</dbReference>
<dbReference type="NCBIfam" id="NF002223">
    <property type="entry name" value="PRK01117.1"/>
    <property type="match status" value="1"/>
</dbReference>
<dbReference type="NCBIfam" id="TIGR00184">
    <property type="entry name" value="purA"/>
    <property type="match status" value="1"/>
</dbReference>
<dbReference type="PANTHER" id="PTHR11846">
    <property type="entry name" value="ADENYLOSUCCINATE SYNTHETASE"/>
    <property type="match status" value="1"/>
</dbReference>
<dbReference type="PANTHER" id="PTHR11846:SF0">
    <property type="entry name" value="ADENYLOSUCCINATE SYNTHETASE"/>
    <property type="match status" value="1"/>
</dbReference>
<dbReference type="Pfam" id="PF00709">
    <property type="entry name" value="Adenylsucc_synt"/>
    <property type="match status" value="1"/>
</dbReference>
<dbReference type="SMART" id="SM00788">
    <property type="entry name" value="Adenylsucc_synt"/>
    <property type="match status" value="1"/>
</dbReference>
<dbReference type="SUPFAM" id="SSF52540">
    <property type="entry name" value="P-loop containing nucleoside triphosphate hydrolases"/>
    <property type="match status" value="1"/>
</dbReference>
<dbReference type="PROSITE" id="PS01266">
    <property type="entry name" value="ADENYLOSUCCIN_SYN_1"/>
    <property type="match status" value="1"/>
</dbReference>
<dbReference type="PROSITE" id="PS00513">
    <property type="entry name" value="ADENYLOSUCCIN_SYN_2"/>
    <property type="match status" value="1"/>
</dbReference>
<sequence>MGITIVLGSQWGDEGKGKITDMLSQEATLCCRAAGGHNAGHTIVHDNITYDFHILPSGLVSPKCVNLIGAGTVVHVPSFFKELASLEGKGLKGAGKRIFISDRAHVCFDLHSVVDGLEEARLGGRKVGTTGKGIGPCYSDKAARRGVRVGEIMDEAVFERKLRTLHAGYTARFGDLEYDVEEEIGRFKEYRQRLVPYIVDQLAFFKQYKDSPNTLVEGANALMLDLDHGTYPYVTSSSTGLGGAVQALSLNPASITSIIGVVKAYTTRVGSGPFPSEQLNEYGDKLQSVGREFGVTTGRRRRCGWFDLVLCRYSHAINHYTALNLTKLDVLDDFDEIKVGVAYVLPDGTRLTDTYPADAAVQENVKVEYVTLPGWKSNTMGVQKYEDLPANARAYIEYIERELGGVPVKWIGTGPARDHMICRE</sequence>
<proteinExistence type="inferred from homology"/>
<gene>
    <name type="ORF">ACLA_019890</name>
</gene>
<evidence type="ECO:0000250" key="1"/>
<evidence type="ECO:0000255" key="2">
    <source>
        <dbReference type="HAMAP-Rule" id="MF_03125"/>
    </source>
</evidence>
<comment type="function">
    <text evidence="1">Plays an important role in the de novo pathway and in the salvage pathway of purine nucleotide biosynthesis. Catalyzes the first committed step in the biosynthesis of AMP from IMP (By similarity).</text>
</comment>
<comment type="catalytic activity">
    <reaction evidence="2">
        <text>IMP + L-aspartate + GTP = N(6)-(1,2-dicarboxyethyl)-AMP + GDP + phosphate + 2 H(+)</text>
        <dbReference type="Rhea" id="RHEA:15753"/>
        <dbReference type="ChEBI" id="CHEBI:15378"/>
        <dbReference type="ChEBI" id="CHEBI:29991"/>
        <dbReference type="ChEBI" id="CHEBI:37565"/>
        <dbReference type="ChEBI" id="CHEBI:43474"/>
        <dbReference type="ChEBI" id="CHEBI:57567"/>
        <dbReference type="ChEBI" id="CHEBI:58053"/>
        <dbReference type="ChEBI" id="CHEBI:58189"/>
        <dbReference type="EC" id="6.3.4.4"/>
    </reaction>
</comment>
<comment type="cofactor">
    <cofactor evidence="2">
        <name>Mg(2+)</name>
        <dbReference type="ChEBI" id="CHEBI:18420"/>
    </cofactor>
    <text evidence="2">Binds 1 Mg(2+) ion per subunit.</text>
</comment>
<comment type="pathway">
    <text evidence="2">Purine metabolism; AMP biosynthesis via de novo pathway; AMP from IMP: step 1/2.</text>
</comment>
<comment type="subunit">
    <text evidence="2">Homodimer.</text>
</comment>
<comment type="subcellular location">
    <subcellularLocation>
        <location evidence="2">Cytoplasm</location>
    </subcellularLocation>
</comment>
<comment type="similarity">
    <text evidence="2">Belongs to the adenylosuccinate synthetase family.</text>
</comment>
<protein>
    <recommendedName>
        <fullName evidence="2">Adenylosuccinate synthetase</fullName>
        <shortName evidence="2">AMPSase</shortName>
        <shortName evidence="2">AdSS</shortName>
        <ecNumber evidence="2">6.3.4.4</ecNumber>
    </recommendedName>
    <alternativeName>
        <fullName evidence="2">IMP--aspartate ligase</fullName>
    </alternativeName>
</protein>
<name>PURA_ASPCL</name>
<reference key="1">
    <citation type="journal article" date="2008" name="PLoS Genet.">
        <title>Genomic islands in the pathogenic filamentous fungus Aspergillus fumigatus.</title>
        <authorList>
            <person name="Fedorova N.D."/>
            <person name="Khaldi N."/>
            <person name="Joardar V.S."/>
            <person name="Maiti R."/>
            <person name="Amedeo P."/>
            <person name="Anderson M.J."/>
            <person name="Crabtree J."/>
            <person name="Silva J.C."/>
            <person name="Badger J.H."/>
            <person name="Albarraq A."/>
            <person name="Angiuoli S."/>
            <person name="Bussey H."/>
            <person name="Bowyer P."/>
            <person name="Cotty P.J."/>
            <person name="Dyer P.S."/>
            <person name="Egan A."/>
            <person name="Galens K."/>
            <person name="Fraser-Liggett C.M."/>
            <person name="Haas B.J."/>
            <person name="Inman J.M."/>
            <person name="Kent R."/>
            <person name="Lemieux S."/>
            <person name="Malavazi I."/>
            <person name="Orvis J."/>
            <person name="Roemer T."/>
            <person name="Ronning C.M."/>
            <person name="Sundaram J.P."/>
            <person name="Sutton G."/>
            <person name="Turner G."/>
            <person name="Venter J.C."/>
            <person name="White O.R."/>
            <person name="Whitty B.R."/>
            <person name="Youngman P."/>
            <person name="Wolfe K.H."/>
            <person name="Goldman G.H."/>
            <person name="Wortman J.R."/>
            <person name="Jiang B."/>
            <person name="Denning D.W."/>
            <person name="Nierman W.C."/>
        </authorList>
    </citation>
    <scope>NUCLEOTIDE SEQUENCE [LARGE SCALE GENOMIC DNA]</scope>
    <source>
        <strain>ATCC 1007 / CBS 513.65 / DSM 816 / NCTC 3887 / NRRL 1 / QM 1276 / 107</strain>
    </source>
</reference>